<proteinExistence type="inferred from homology"/>
<feature type="chain" id="PRO_1000134874" description="4-hydroxy-tetrahydrodipicolinate synthase">
    <location>
        <begin position="1"/>
        <end position="300"/>
    </location>
</feature>
<feature type="active site" description="Proton donor/acceptor" evidence="1">
    <location>
        <position position="143"/>
    </location>
</feature>
<feature type="active site" description="Schiff-base intermediate with substrate" evidence="1">
    <location>
        <position position="171"/>
    </location>
</feature>
<feature type="binding site" evidence="1">
    <location>
        <position position="55"/>
    </location>
    <ligand>
        <name>pyruvate</name>
        <dbReference type="ChEBI" id="CHEBI:15361"/>
    </ligand>
</feature>
<feature type="binding site" evidence="1">
    <location>
        <position position="211"/>
    </location>
    <ligand>
        <name>pyruvate</name>
        <dbReference type="ChEBI" id="CHEBI:15361"/>
    </ligand>
</feature>
<feature type="site" description="Part of a proton relay during catalysis" evidence="1">
    <location>
        <position position="54"/>
    </location>
</feature>
<feature type="site" description="Part of a proton relay during catalysis" evidence="1">
    <location>
        <position position="117"/>
    </location>
</feature>
<gene>
    <name evidence="1" type="primary">dapA</name>
    <name type="ordered locus">MLBr01513</name>
</gene>
<dbReference type="EC" id="4.3.3.7" evidence="1"/>
<dbReference type="EMBL" id="FM211192">
    <property type="protein sequence ID" value="CAR71608.1"/>
    <property type="molecule type" value="Genomic_DNA"/>
</dbReference>
<dbReference type="SMR" id="B8ZRR3"/>
<dbReference type="KEGG" id="mlb:MLBr01513"/>
<dbReference type="HOGENOM" id="CLU_049343_7_1_11"/>
<dbReference type="UniPathway" id="UPA00034">
    <property type="reaction ID" value="UER00017"/>
</dbReference>
<dbReference type="Proteomes" id="UP000006900">
    <property type="component" value="Chromosome"/>
</dbReference>
<dbReference type="GO" id="GO:0005829">
    <property type="term" value="C:cytosol"/>
    <property type="evidence" value="ECO:0007669"/>
    <property type="project" value="TreeGrafter"/>
</dbReference>
<dbReference type="GO" id="GO:0008840">
    <property type="term" value="F:4-hydroxy-tetrahydrodipicolinate synthase activity"/>
    <property type="evidence" value="ECO:0007669"/>
    <property type="project" value="UniProtKB-UniRule"/>
</dbReference>
<dbReference type="GO" id="GO:0019877">
    <property type="term" value="P:diaminopimelate biosynthetic process"/>
    <property type="evidence" value="ECO:0007669"/>
    <property type="project" value="UniProtKB-UniRule"/>
</dbReference>
<dbReference type="GO" id="GO:0009089">
    <property type="term" value="P:lysine biosynthetic process via diaminopimelate"/>
    <property type="evidence" value="ECO:0007669"/>
    <property type="project" value="UniProtKB-UniRule"/>
</dbReference>
<dbReference type="CDD" id="cd00950">
    <property type="entry name" value="DHDPS"/>
    <property type="match status" value="1"/>
</dbReference>
<dbReference type="Gene3D" id="3.20.20.70">
    <property type="entry name" value="Aldolase class I"/>
    <property type="match status" value="1"/>
</dbReference>
<dbReference type="HAMAP" id="MF_00418">
    <property type="entry name" value="DapA"/>
    <property type="match status" value="1"/>
</dbReference>
<dbReference type="InterPro" id="IPR013785">
    <property type="entry name" value="Aldolase_TIM"/>
</dbReference>
<dbReference type="InterPro" id="IPR005263">
    <property type="entry name" value="DapA"/>
</dbReference>
<dbReference type="InterPro" id="IPR002220">
    <property type="entry name" value="DapA-like"/>
</dbReference>
<dbReference type="InterPro" id="IPR020625">
    <property type="entry name" value="Schiff_base-form_aldolases_AS"/>
</dbReference>
<dbReference type="InterPro" id="IPR020624">
    <property type="entry name" value="Schiff_base-form_aldolases_CS"/>
</dbReference>
<dbReference type="NCBIfam" id="TIGR00674">
    <property type="entry name" value="dapA"/>
    <property type="match status" value="1"/>
</dbReference>
<dbReference type="PANTHER" id="PTHR12128:SF66">
    <property type="entry name" value="4-HYDROXY-2-OXOGLUTARATE ALDOLASE, MITOCHONDRIAL"/>
    <property type="match status" value="1"/>
</dbReference>
<dbReference type="PANTHER" id="PTHR12128">
    <property type="entry name" value="DIHYDRODIPICOLINATE SYNTHASE"/>
    <property type="match status" value="1"/>
</dbReference>
<dbReference type="Pfam" id="PF00701">
    <property type="entry name" value="DHDPS"/>
    <property type="match status" value="1"/>
</dbReference>
<dbReference type="PIRSF" id="PIRSF001365">
    <property type="entry name" value="DHDPS"/>
    <property type="match status" value="1"/>
</dbReference>
<dbReference type="PRINTS" id="PR00146">
    <property type="entry name" value="DHPICSNTHASE"/>
</dbReference>
<dbReference type="SMART" id="SM01130">
    <property type="entry name" value="DHDPS"/>
    <property type="match status" value="1"/>
</dbReference>
<dbReference type="SUPFAM" id="SSF51569">
    <property type="entry name" value="Aldolase"/>
    <property type="match status" value="1"/>
</dbReference>
<dbReference type="PROSITE" id="PS00665">
    <property type="entry name" value="DHDPS_1"/>
    <property type="match status" value="1"/>
</dbReference>
<dbReference type="PROSITE" id="PS00666">
    <property type="entry name" value="DHDPS_2"/>
    <property type="match status" value="1"/>
</dbReference>
<organism>
    <name type="scientific">Mycobacterium leprae (strain Br4923)</name>
    <dbReference type="NCBI Taxonomy" id="561304"/>
    <lineage>
        <taxon>Bacteria</taxon>
        <taxon>Bacillati</taxon>
        <taxon>Actinomycetota</taxon>
        <taxon>Actinomycetes</taxon>
        <taxon>Mycobacteriales</taxon>
        <taxon>Mycobacteriaceae</taxon>
        <taxon>Mycobacterium</taxon>
    </lineage>
</organism>
<name>DAPA_MYCLB</name>
<evidence type="ECO:0000255" key="1">
    <source>
        <dbReference type="HAMAP-Rule" id="MF_00418"/>
    </source>
</evidence>
<evidence type="ECO:0000305" key="2"/>
<comment type="function">
    <text evidence="1">Catalyzes the condensation of (S)-aspartate-beta-semialdehyde [(S)-ASA] and pyruvate to 4-hydroxy-tetrahydrodipicolinate (HTPA).</text>
</comment>
<comment type="catalytic activity">
    <reaction evidence="1">
        <text>L-aspartate 4-semialdehyde + pyruvate = (2S,4S)-4-hydroxy-2,3,4,5-tetrahydrodipicolinate + H2O + H(+)</text>
        <dbReference type="Rhea" id="RHEA:34171"/>
        <dbReference type="ChEBI" id="CHEBI:15361"/>
        <dbReference type="ChEBI" id="CHEBI:15377"/>
        <dbReference type="ChEBI" id="CHEBI:15378"/>
        <dbReference type="ChEBI" id="CHEBI:67139"/>
        <dbReference type="ChEBI" id="CHEBI:537519"/>
        <dbReference type="EC" id="4.3.3.7"/>
    </reaction>
</comment>
<comment type="pathway">
    <text evidence="1">Amino-acid biosynthesis; L-lysine biosynthesis via DAP pathway; (S)-tetrahydrodipicolinate from L-aspartate: step 3/4.</text>
</comment>
<comment type="subunit">
    <text evidence="1">Homotetramer; dimer of dimers.</text>
</comment>
<comment type="subcellular location">
    <subcellularLocation>
        <location evidence="1">Cytoplasm</location>
    </subcellularLocation>
</comment>
<comment type="similarity">
    <text evidence="1">Belongs to the DapA family.</text>
</comment>
<comment type="caution">
    <text evidence="2">Was originally thought to be a dihydrodipicolinate synthase (DHDPS), catalyzing the condensation of (S)-aspartate-beta-semialdehyde [(S)-ASA] and pyruvate to dihydrodipicolinate (DHDP). However, it was shown in E.coli that the product of the enzymatic reaction is not dihydrodipicolinate but in fact (4S)-4-hydroxy-2,3,4,5-tetrahydro-(2S)-dipicolinic acid (HTPA), and that the consecutive dehydration reaction leading to DHDP is not spontaneous but catalyzed by DapB.</text>
</comment>
<protein>
    <recommendedName>
        <fullName evidence="1">4-hydroxy-tetrahydrodipicolinate synthase</fullName>
        <shortName evidence="1">HTPA synthase</shortName>
        <ecNumber evidence="1">4.3.3.7</ecNumber>
    </recommendedName>
</protein>
<reference key="1">
    <citation type="journal article" date="2009" name="Nat. Genet.">
        <title>Comparative genomic and phylogeographic analysis of Mycobacterium leprae.</title>
        <authorList>
            <person name="Monot M."/>
            <person name="Honore N."/>
            <person name="Garnier T."/>
            <person name="Zidane N."/>
            <person name="Sherafi D."/>
            <person name="Paniz-Mondolfi A."/>
            <person name="Matsuoka M."/>
            <person name="Taylor G.M."/>
            <person name="Donoghue H.D."/>
            <person name="Bouwman A."/>
            <person name="Mays S."/>
            <person name="Watson C."/>
            <person name="Lockwood D."/>
            <person name="Khamispour A."/>
            <person name="Dowlati Y."/>
            <person name="Jianping S."/>
            <person name="Rea T.H."/>
            <person name="Vera-Cabrera L."/>
            <person name="Stefani M.M."/>
            <person name="Banu S."/>
            <person name="Macdonald M."/>
            <person name="Sapkota B.R."/>
            <person name="Spencer J.S."/>
            <person name="Thomas J."/>
            <person name="Harshman K."/>
            <person name="Singh P."/>
            <person name="Busso P."/>
            <person name="Gattiker A."/>
            <person name="Rougemont J."/>
            <person name="Brennan P.J."/>
            <person name="Cole S.T."/>
        </authorList>
    </citation>
    <scope>NUCLEOTIDE SEQUENCE [LARGE SCALE GENOMIC DNA]</scope>
    <source>
        <strain>Br4923</strain>
    </source>
</reference>
<sequence length="300" mass="31137">MTTVGFDVPARLGTLLTAMVTPFDADGSVDTAAATRLANRLVDAGCDGLVLSGTTGESPTTTDDEKLQLLRVVLEAVGDRARVIAGAGSYDTAHSVRLVKACAGEGAHGLLVVTPYYSKPPQTGLFAHFTAVADATELPVLLYDIPGRSVVPIEPDTIRALASHPNIVGVKEAKADLYSGARIMADTGLAYYSGDDALNLPWLAVGAIGFISVISHLAAGQLRELLSAFGSGDITTARKINVAIGPLCSAMDRLGGVTMSKAGLRLQGIDVGDPRLPQMPATAEQIDELAVDMRAASVLR</sequence>
<accession>B8ZRR3</accession>
<keyword id="KW-0028">Amino-acid biosynthesis</keyword>
<keyword id="KW-0963">Cytoplasm</keyword>
<keyword id="KW-0220">Diaminopimelate biosynthesis</keyword>
<keyword id="KW-0456">Lyase</keyword>
<keyword id="KW-0457">Lysine biosynthesis</keyword>
<keyword id="KW-0704">Schiff base</keyword>